<comment type="function">
    <text evidence="2 3 4">Destroys radicals which are normally produced within the cells and which are toxic to biological systems. Mediates tolerance to stress, including photo-oxidative stress.</text>
</comment>
<comment type="catalytic activity">
    <reaction>
        <text>2 superoxide + 2 H(+) = H2O2 + O2</text>
        <dbReference type="Rhea" id="RHEA:20696"/>
        <dbReference type="ChEBI" id="CHEBI:15378"/>
        <dbReference type="ChEBI" id="CHEBI:15379"/>
        <dbReference type="ChEBI" id="CHEBI:16240"/>
        <dbReference type="ChEBI" id="CHEBI:18421"/>
        <dbReference type="EC" id="1.15.1.1"/>
    </reaction>
</comment>
<comment type="cofactor">
    <cofactor evidence="1">
        <name>Cu cation</name>
        <dbReference type="ChEBI" id="CHEBI:23378"/>
    </cofactor>
    <text evidence="1">Binds 1 copper ion per subunit.</text>
</comment>
<comment type="cofactor">
    <cofactor evidence="1">
        <name>Zn(2+)</name>
        <dbReference type="ChEBI" id="CHEBI:29105"/>
    </cofactor>
    <text evidence="1">Binds 1 zinc ion per subunit.</text>
</comment>
<comment type="subunit">
    <text evidence="1">Homotetramer.</text>
</comment>
<comment type="subcellular location">
    <subcellularLocation>
        <location evidence="7 8">Plastid</location>
        <location evidence="7 8">Chloroplast</location>
    </subcellularLocation>
</comment>
<comment type="tissue specificity">
    <text evidence="4 8">Expressed in leaves (at protein level). The spatial localization is regulated by miR398-mediated silencing. Mostly present in flowers, old rosette leaves and inflorescence, and, to a lower extent, in cauline leaves, stems and roots.</text>
</comment>
<comment type="induction">
    <text evidence="4 5 6 8">Upon photosynthetically active radiation (PAR) (e.g. light fluence) increase and UV-B treatment. Accumulates in response to ozone fumigation, during recovery. Induced in response to oxidative stress, via a reduction of miR398-mediated silencing. Repressed by sucrose in a miR398-mediated silencing-dependent manner. Repressed by salt stress. Down-regulated by aconitase.</text>
</comment>
<comment type="disruption phenotype">
    <text evidence="3">Growth retardation (e.g. delayed flowering) and abnormal chloroplasts (e.g. less organized with fewer stacks). This phenotype is reversed under very low light conditions. Enhanced tolerance to oxidative stress.</text>
</comment>
<comment type="similarity">
    <text evidence="9">Belongs to the Cu-Zn superoxide dismutase family.</text>
</comment>
<proteinExistence type="evidence at protein level"/>
<gene>
    <name type="primary">CSD2</name>
    <name type="synonym">KD-SOD</name>
    <name type="synonym">SODCP</name>
    <name type="ordered locus">At2g28190</name>
    <name type="ORF">F24D13.2</name>
</gene>
<organism>
    <name type="scientific">Arabidopsis thaliana</name>
    <name type="common">Mouse-ear cress</name>
    <dbReference type="NCBI Taxonomy" id="3702"/>
    <lineage>
        <taxon>Eukaryota</taxon>
        <taxon>Viridiplantae</taxon>
        <taxon>Streptophyta</taxon>
        <taxon>Embryophyta</taxon>
        <taxon>Tracheophyta</taxon>
        <taxon>Spermatophyta</taxon>
        <taxon>Magnoliopsida</taxon>
        <taxon>eudicotyledons</taxon>
        <taxon>Gunneridae</taxon>
        <taxon>Pentapetalae</taxon>
        <taxon>rosids</taxon>
        <taxon>malvids</taxon>
        <taxon>Brassicales</taxon>
        <taxon>Brassicaceae</taxon>
        <taxon>Camelineae</taxon>
        <taxon>Arabidopsis</taxon>
    </lineage>
</organism>
<feature type="transit peptide" description="Chloroplast">
    <location>
        <begin position="1"/>
        <end position="62"/>
    </location>
</feature>
<feature type="chain" id="PRO_0000032844" description="Superoxide dismutase [Cu-Zn] 2, chloroplastic">
    <location>
        <begin position="63"/>
        <end position="216"/>
    </location>
</feature>
<feature type="binding site" evidence="1">
    <location>
        <position position="108"/>
    </location>
    <ligand>
        <name>Cu cation</name>
        <dbReference type="ChEBI" id="CHEBI:23378"/>
        <note>catalytic</note>
    </ligand>
</feature>
<feature type="binding site" evidence="1">
    <location>
        <position position="110"/>
    </location>
    <ligand>
        <name>Cu cation</name>
        <dbReference type="ChEBI" id="CHEBI:23378"/>
        <note>catalytic</note>
    </ligand>
</feature>
<feature type="binding site" evidence="1">
    <location>
        <position position="125"/>
    </location>
    <ligand>
        <name>Cu cation</name>
        <dbReference type="ChEBI" id="CHEBI:23378"/>
        <note>catalytic</note>
    </ligand>
</feature>
<feature type="binding site" evidence="1">
    <location>
        <position position="125"/>
    </location>
    <ligand>
        <name>Zn(2+)</name>
        <dbReference type="ChEBI" id="CHEBI:29105"/>
        <note>structural</note>
    </ligand>
</feature>
<feature type="binding site" evidence="1">
    <location>
        <position position="133"/>
    </location>
    <ligand>
        <name>Zn(2+)</name>
        <dbReference type="ChEBI" id="CHEBI:29105"/>
        <note>structural</note>
    </ligand>
</feature>
<feature type="binding site" evidence="1">
    <location>
        <position position="142"/>
    </location>
    <ligand>
        <name>Zn(2+)</name>
        <dbReference type="ChEBI" id="CHEBI:29105"/>
        <note>structural</note>
    </ligand>
</feature>
<feature type="binding site" evidence="1">
    <location>
        <position position="145"/>
    </location>
    <ligand>
        <name>Zn(2+)</name>
        <dbReference type="ChEBI" id="CHEBI:29105"/>
        <note>structural</note>
    </ligand>
</feature>
<feature type="binding site" evidence="1">
    <location>
        <position position="182"/>
    </location>
    <ligand>
        <name>Cu cation</name>
        <dbReference type="ChEBI" id="CHEBI:23378"/>
        <note>catalytic</note>
    </ligand>
</feature>
<feature type="disulfide bond" evidence="1">
    <location>
        <begin position="119"/>
        <end position="208"/>
    </location>
</feature>
<feature type="sequence variant" description="In strain: cv. Cvi-1; enhanced stability and better tolerance to photo-oxidative stress conditions; when associated with S-39, A-101 and K-164." evidence="2">
    <original>N</original>
    <variation>Y</variation>
    <location>
        <position position="23"/>
    </location>
</feature>
<feature type="sequence variant" description="In strain: cv. Cvi-1; enhanced stability and better tolerance to photo-oxidative stress conditions; when associated with Y-23, A-101 and K-164." evidence="2">
    <original>N</original>
    <variation>S</variation>
    <location>
        <position position="39"/>
    </location>
</feature>
<feature type="sequence variant" description="In strain: cv. Cvi-1; enhanced stability and better tolerance to photo-oxidative stress conditions; when associated with Y-23, S-39 and K-164." evidence="2">
    <original>T</original>
    <variation>A</variation>
    <location>
        <position position="101"/>
    </location>
</feature>
<feature type="sequence variant" description="In strain: cv. Cvi-1; enhanced stability and better tolerance to photo-oxidative stress conditions; when associated with Y-23, S-39 and A-101." evidence="2">
    <original>N</original>
    <variation>K</variation>
    <location>
        <position position="164"/>
    </location>
</feature>
<feature type="sequence conflict" description="In Ref. 1; AAD10208 and 7; AAM65492." evidence="9" ref="1 7">
    <original>R</original>
    <variation>S</variation>
    <location>
        <position position="32"/>
    </location>
</feature>
<protein>
    <recommendedName>
        <fullName>Superoxide dismutase [Cu-Zn] 2, chloroplastic</fullName>
        <ecNumber>1.15.1.1</ecNumber>
    </recommendedName>
    <alternativeName>
        <fullName>Copper/zinc superoxide dismutase 2</fullName>
    </alternativeName>
</protein>
<dbReference type="EC" id="1.15.1.1"/>
<dbReference type="EMBL" id="AF061519">
    <property type="protein sequence ID" value="AAD10208.1"/>
    <property type="molecule type" value="mRNA"/>
</dbReference>
<dbReference type="EMBL" id="AJ238521">
    <property type="protein sequence ID" value="CAB51839.1"/>
    <property type="molecule type" value="Genomic_DNA"/>
</dbReference>
<dbReference type="EMBL" id="AJ238522">
    <property type="protein sequence ID" value="CAB51840.1"/>
    <property type="molecule type" value="Genomic_DNA"/>
</dbReference>
<dbReference type="EMBL" id="AC005851">
    <property type="protein sequence ID" value="AAM15088.1"/>
    <property type="molecule type" value="Genomic_DNA"/>
</dbReference>
<dbReference type="EMBL" id="CP002685">
    <property type="protein sequence ID" value="AEC08089.1"/>
    <property type="molecule type" value="Genomic_DNA"/>
</dbReference>
<dbReference type="EMBL" id="AY064050">
    <property type="protein sequence ID" value="AAL36406.1"/>
    <property type="molecule type" value="mRNA"/>
</dbReference>
<dbReference type="EMBL" id="AY133756">
    <property type="protein sequence ID" value="AAM91690.1"/>
    <property type="molecule type" value="mRNA"/>
</dbReference>
<dbReference type="EMBL" id="AK227096">
    <property type="protein sequence ID" value="BAE99148.1"/>
    <property type="molecule type" value="mRNA"/>
</dbReference>
<dbReference type="EMBL" id="AY087944">
    <property type="protein sequence ID" value="AAM65492.1"/>
    <property type="molecule type" value="mRNA"/>
</dbReference>
<dbReference type="PIR" id="T51730">
    <property type="entry name" value="T51730"/>
</dbReference>
<dbReference type="RefSeq" id="NP_565666.1">
    <property type="nucleotide sequence ID" value="NM_128379.4"/>
</dbReference>
<dbReference type="SMR" id="O78310"/>
<dbReference type="BioGRID" id="2715">
    <property type="interactions" value="2"/>
</dbReference>
<dbReference type="FunCoup" id="O78310">
    <property type="interactions" value="762"/>
</dbReference>
<dbReference type="IntAct" id="O78310">
    <property type="interactions" value="1"/>
</dbReference>
<dbReference type="STRING" id="3702.O78310"/>
<dbReference type="iPTMnet" id="O78310"/>
<dbReference type="PaxDb" id="3702-AT2G28190.1"/>
<dbReference type="ProteomicsDB" id="232601"/>
<dbReference type="EnsemblPlants" id="AT2G28190.1">
    <property type="protein sequence ID" value="AT2G28190.1"/>
    <property type="gene ID" value="AT2G28190"/>
</dbReference>
<dbReference type="GeneID" id="817365"/>
<dbReference type="Gramene" id="AT2G28190.1">
    <property type="protein sequence ID" value="AT2G28190.1"/>
    <property type="gene ID" value="AT2G28190"/>
</dbReference>
<dbReference type="KEGG" id="ath:AT2G28190"/>
<dbReference type="Araport" id="AT2G28190"/>
<dbReference type="TAIR" id="AT2G28190">
    <property type="gene designation" value="CSD2"/>
</dbReference>
<dbReference type="eggNOG" id="KOG0441">
    <property type="taxonomic scope" value="Eukaryota"/>
</dbReference>
<dbReference type="HOGENOM" id="CLU_056632_1_0_1"/>
<dbReference type="InParanoid" id="O78310"/>
<dbReference type="OMA" id="IVAHEGC"/>
<dbReference type="OrthoDB" id="2015551at2759"/>
<dbReference type="PhylomeDB" id="O78310"/>
<dbReference type="BRENDA" id="1.15.1.1">
    <property type="organism ID" value="399"/>
</dbReference>
<dbReference type="PRO" id="PR:O78310"/>
<dbReference type="Proteomes" id="UP000006548">
    <property type="component" value="Chromosome 2"/>
</dbReference>
<dbReference type="ExpressionAtlas" id="O78310">
    <property type="expression patterns" value="baseline and differential"/>
</dbReference>
<dbReference type="GO" id="GO:0048046">
    <property type="term" value="C:apoplast"/>
    <property type="evidence" value="ECO:0007005"/>
    <property type="project" value="TAIR"/>
</dbReference>
<dbReference type="GO" id="GO:0009507">
    <property type="term" value="C:chloroplast"/>
    <property type="evidence" value="ECO:0000314"/>
    <property type="project" value="UniProtKB"/>
</dbReference>
<dbReference type="GO" id="GO:0009570">
    <property type="term" value="C:chloroplast stroma"/>
    <property type="evidence" value="ECO:0007005"/>
    <property type="project" value="TAIR"/>
</dbReference>
<dbReference type="GO" id="GO:0009579">
    <property type="term" value="C:thylakoid"/>
    <property type="evidence" value="ECO:0007005"/>
    <property type="project" value="TAIR"/>
</dbReference>
<dbReference type="GO" id="GO:0005507">
    <property type="term" value="F:copper ion binding"/>
    <property type="evidence" value="ECO:0007669"/>
    <property type="project" value="InterPro"/>
</dbReference>
<dbReference type="GO" id="GO:0004784">
    <property type="term" value="F:superoxide dismutase activity"/>
    <property type="evidence" value="ECO:0007669"/>
    <property type="project" value="UniProtKB-EC"/>
</dbReference>
<dbReference type="GO" id="GO:0071484">
    <property type="term" value="P:cellular response to light intensity"/>
    <property type="evidence" value="ECO:0000270"/>
    <property type="project" value="UniProtKB"/>
</dbReference>
<dbReference type="GO" id="GO:0034599">
    <property type="term" value="P:cellular response to oxidative stress"/>
    <property type="evidence" value="ECO:0000270"/>
    <property type="project" value="UniProtKB"/>
</dbReference>
<dbReference type="GO" id="GO:0071457">
    <property type="term" value="P:cellular response to ozone"/>
    <property type="evidence" value="ECO:0000270"/>
    <property type="project" value="UniProtKB"/>
</dbReference>
<dbReference type="GO" id="GO:0071472">
    <property type="term" value="P:cellular response to salt stress"/>
    <property type="evidence" value="ECO:0000270"/>
    <property type="project" value="UniProtKB"/>
</dbReference>
<dbReference type="GO" id="GO:0071329">
    <property type="term" value="P:cellular response to sucrose stimulus"/>
    <property type="evidence" value="ECO:0000270"/>
    <property type="project" value="UniProtKB"/>
</dbReference>
<dbReference type="GO" id="GO:0071493">
    <property type="term" value="P:cellular response to UV-B"/>
    <property type="evidence" value="ECO:0000270"/>
    <property type="project" value="UniProtKB"/>
</dbReference>
<dbReference type="GO" id="GO:0035195">
    <property type="term" value="P:miRNA-mediated post-transcriptional gene silencing"/>
    <property type="evidence" value="ECO:0000270"/>
    <property type="project" value="UniProtKB"/>
</dbReference>
<dbReference type="GO" id="GO:0046688">
    <property type="term" value="P:response to copper ion"/>
    <property type="evidence" value="ECO:0000270"/>
    <property type="project" value="TAIR"/>
</dbReference>
<dbReference type="GO" id="GO:0010039">
    <property type="term" value="P:response to iron ion"/>
    <property type="evidence" value="ECO:0000270"/>
    <property type="project" value="TAIR"/>
</dbReference>
<dbReference type="GO" id="GO:0006979">
    <property type="term" value="P:response to oxidative stress"/>
    <property type="evidence" value="ECO:0000314"/>
    <property type="project" value="TAIR"/>
</dbReference>
<dbReference type="GO" id="GO:0009651">
    <property type="term" value="P:response to salt stress"/>
    <property type="evidence" value="ECO:0000270"/>
    <property type="project" value="TAIR"/>
</dbReference>
<dbReference type="CDD" id="cd00305">
    <property type="entry name" value="Cu-Zn_Superoxide_Dismutase"/>
    <property type="match status" value="1"/>
</dbReference>
<dbReference type="FunFam" id="2.60.40.200:FF:000003">
    <property type="entry name" value="Superoxide dismutase [Cu-Zn], chloroplastic"/>
    <property type="match status" value="1"/>
</dbReference>
<dbReference type="Gene3D" id="2.60.40.200">
    <property type="entry name" value="Superoxide dismutase, copper/zinc binding domain"/>
    <property type="match status" value="1"/>
</dbReference>
<dbReference type="InterPro" id="IPR036423">
    <property type="entry name" value="SOD-like_Cu/Zn_dom_sf"/>
</dbReference>
<dbReference type="InterPro" id="IPR024134">
    <property type="entry name" value="SOD_Cu/Zn_/chaperone"/>
</dbReference>
<dbReference type="InterPro" id="IPR018152">
    <property type="entry name" value="SOD_Cu/Zn_BS"/>
</dbReference>
<dbReference type="InterPro" id="IPR001424">
    <property type="entry name" value="SOD_Cu_Zn_dom"/>
</dbReference>
<dbReference type="PANTHER" id="PTHR10003">
    <property type="entry name" value="SUPEROXIDE DISMUTASE CU-ZN -RELATED"/>
    <property type="match status" value="1"/>
</dbReference>
<dbReference type="Pfam" id="PF00080">
    <property type="entry name" value="Sod_Cu"/>
    <property type="match status" value="1"/>
</dbReference>
<dbReference type="PRINTS" id="PR00068">
    <property type="entry name" value="CUZNDISMTASE"/>
</dbReference>
<dbReference type="SUPFAM" id="SSF49329">
    <property type="entry name" value="Cu,Zn superoxide dismutase-like"/>
    <property type="match status" value="1"/>
</dbReference>
<dbReference type="PROSITE" id="PS00087">
    <property type="entry name" value="SOD_CU_ZN_1"/>
    <property type="match status" value="1"/>
</dbReference>
<dbReference type="PROSITE" id="PS00332">
    <property type="entry name" value="SOD_CU_ZN_2"/>
    <property type="match status" value="1"/>
</dbReference>
<sequence length="216" mass="22244">MAATNTILAFSSPSRLLIPPSSNPSTLRSSFRGVSLNNNNLHRLQSVSFAVKAPSKALTVVSAAKKAVAVLKGTSDVEGVVTLTQDDSGPTTVNVRITGLTPGPHGFHLHEFGDTTNGCISTGPHFNPNNMTHGAPEDECRHAGDLGNINANADGVAETTIVDNQIPLTGPNSVVGRAFVVHELKDDLGKGGHELSLTTGNAGGRLACGVIGLTPL</sequence>
<accession>O78310</accession>
<accession>Q0WUQ0</accession>
<accession>Q541D5</accession>
<accession>Q9SUJ7</accession>
<accession>Q9SUJ8</accession>
<name>SODC2_ARATH</name>
<evidence type="ECO:0000250" key="1"/>
<evidence type="ECO:0000269" key="2">
    <source>
    </source>
</evidence>
<evidence type="ECO:0000269" key="3">
    <source>
    </source>
</evidence>
<evidence type="ECO:0000269" key="4">
    <source>
    </source>
</evidence>
<evidence type="ECO:0000269" key="5">
    <source>
    </source>
</evidence>
<evidence type="ECO:0000269" key="6">
    <source>
    </source>
</evidence>
<evidence type="ECO:0000269" key="7">
    <source>
    </source>
</evidence>
<evidence type="ECO:0000269" key="8">
    <source>
    </source>
</evidence>
<evidence type="ECO:0000305" key="9"/>
<reference key="1">
    <citation type="journal article" date="1998" name="Plant Physiol.">
        <title>Superoxide dismutase in Arabidopsis: an eclectic enzyme family with disparate regulation and protein localization.</title>
        <authorList>
            <person name="Kliebenstein D.J."/>
            <person name="Monde R.A."/>
            <person name="Last R.L."/>
        </authorList>
    </citation>
    <scope>NUCLEOTIDE SEQUENCE [MRNA]</scope>
    <scope>TISSUE SPECIFICITY</scope>
    <scope>SUBCELLULAR LOCATION</scope>
    <scope>INDUCTION BY LIGHT; UV-B AND OZONE</scope>
    <scope>GENE FAMILY</scope>
    <source>
        <strain>cv. Columbia</strain>
    </source>
</reference>
<reference key="2">
    <citation type="journal article" date="2001" name="J. Exp. Bot.">
        <title>Arabidopsis thaliana ecotype Cvi shows an increased tolerance to photo-oxidative stress and contains a new chloroplastic copper/zinc superoxide dismutase isoenzyme.</title>
        <authorList>
            <person name="Abarca D."/>
            <person name="Roldan M."/>
            <person name="Martin M."/>
            <person name="Sabater B."/>
        </authorList>
    </citation>
    <scope>NUCLEOTIDE SEQUENCE [GENOMIC DNA]</scope>
    <scope>FUNCTION</scope>
    <scope>VARIANTS TYR-23; SER-39; ALA-101 AND LYS-164</scope>
    <source>
        <strain>cv. Cvi-1</strain>
        <strain>cv. Landsberg erecta</strain>
    </source>
</reference>
<reference key="3">
    <citation type="journal article" date="1999" name="Nature">
        <title>Sequence and analysis of chromosome 2 of the plant Arabidopsis thaliana.</title>
        <authorList>
            <person name="Lin X."/>
            <person name="Kaul S."/>
            <person name="Rounsley S.D."/>
            <person name="Shea T.P."/>
            <person name="Benito M.-I."/>
            <person name="Town C.D."/>
            <person name="Fujii C.Y."/>
            <person name="Mason T.M."/>
            <person name="Bowman C.L."/>
            <person name="Barnstead M.E."/>
            <person name="Feldblyum T.V."/>
            <person name="Buell C.R."/>
            <person name="Ketchum K.A."/>
            <person name="Lee J.J."/>
            <person name="Ronning C.M."/>
            <person name="Koo H.L."/>
            <person name="Moffat K.S."/>
            <person name="Cronin L.A."/>
            <person name="Shen M."/>
            <person name="Pai G."/>
            <person name="Van Aken S."/>
            <person name="Umayam L."/>
            <person name="Tallon L.J."/>
            <person name="Gill J.E."/>
            <person name="Adams M.D."/>
            <person name="Carrera A.J."/>
            <person name="Creasy T.H."/>
            <person name="Goodman H.M."/>
            <person name="Somerville C.R."/>
            <person name="Copenhaver G.P."/>
            <person name="Preuss D."/>
            <person name="Nierman W.C."/>
            <person name="White O."/>
            <person name="Eisen J.A."/>
            <person name="Salzberg S.L."/>
            <person name="Fraser C.M."/>
            <person name="Venter J.C."/>
        </authorList>
    </citation>
    <scope>NUCLEOTIDE SEQUENCE [LARGE SCALE GENOMIC DNA]</scope>
    <source>
        <strain>cv. Columbia</strain>
    </source>
</reference>
<reference key="4">
    <citation type="journal article" date="2017" name="Plant J.">
        <title>Araport11: a complete reannotation of the Arabidopsis thaliana reference genome.</title>
        <authorList>
            <person name="Cheng C.Y."/>
            <person name="Krishnakumar V."/>
            <person name="Chan A.P."/>
            <person name="Thibaud-Nissen F."/>
            <person name="Schobel S."/>
            <person name="Town C.D."/>
        </authorList>
    </citation>
    <scope>GENOME REANNOTATION</scope>
    <source>
        <strain>cv. Columbia</strain>
    </source>
</reference>
<reference key="5">
    <citation type="journal article" date="2003" name="Science">
        <title>Empirical analysis of transcriptional activity in the Arabidopsis genome.</title>
        <authorList>
            <person name="Yamada K."/>
            <person name="Lim J."/>
            <person name="Dale J.M."/>
            <person name="Chen H."/>
            <person name="Shinn P."/>
            <person name="Palm C.J."/>
            <person name="Southwick A.M."/>
            <person name="Wu H.C."/>
            <person name="Kim C.J."/>
            <person name="Nguyen M."/>
            <person name="Pham P.K."/>
            <person name="Cheuk R.F."/>
            <person name="Karlin-Newmann G."/>
            <person name="Liu S.X."/>
            <person name="Lam B."/>
            <person name="Sakano H."/>
            <person name="Wu T."/>
            <person name="Yu G."/>
            <person name="Miranda M."/>
            <person name="Quach H.L."/>
            <person name="Tripp M."/>
            <person name="Chang C.H."/>
            <person name="Lee J.M."/>
            <person name="Toriumi M.J."/>
            <person name="Chan M.M."/>
            <person name="Tang C.C."/>
            <person name="Onodera C.S."/>
            <person name="Deng J.M."/>
            <person name="Akiyama K."/>
            <person name="Ansari Y."/>
            <person name="Arakawa T."/>
            <person name="Banh J."/>
            <person name="Banno F."/>
            <person name="Bowser L."/>
            <person name="Brooks S.Y."/>
            <person name="Carninci P."/>
            <person name="Chao Q."/>
            <person name="Choy N."/>
            <person name="Enju A."/>
            <person name="Goldsmith A.D."/>
            <person name="Gurjal M."/>
            <person name="Hansen N.F."/>
            <person name="Hayashizaki Y."/>
            <person name="Johnson-Hopson C."/>
            <person name="Hsuan V.W."/>
            <person name="Iida K."/>
            <person name="Karnes M."/>
            <person name="Khan S."/>
            <person name="Koesema E."/>
            <person name="Ishida J."/>
            <person name="Jiang P.X."/>
            <person name="Jones T."/>
            <person name="Kawai J."/>
            <person name="Kamiya A."/>
            <person name="Meyers C."/>
            <person name="Nakajima M."/>
            <person name="Narusaka M."/>
            <person name="Seki M."/>
            <person name="Sakurai T."/>
            <person name="Satou M."/>
            <person name="Tamse R."/>
            <person name="Vaysberg M."/>
            <person name="Wallender E.K."/>
            <person name="Wong C."/>
            <person name="Yamamura Y."/>
            <person name="Yuan S."/>
            <person name="Shinozaki K."/>
            <person name="Davis R.W."/>
            <person name="Theologis A."/>
            <person name="Ecker J.R."/>
        </authorList>
    </citation>
    <scope>NUCLEOTIDE SEQUENCE [LARGE SCALE MRNA]</scope>
    <source>
        <strain>cv. Columbia</strain>
    </source>
</reference>
<reference key="6">
    <citation type="submission" date="2006-07" db="EMBL/GenBank/DDBJ databases">
        <title>Large-scale analysis of RIKEN Arabidopsis full-length (RAFL) cDNAs.</title>
        <authorList>
            <person name="Totoki Y."/>
            <person name="Seki M."/>
            <person name="Ishida J."/>
            <person name="Nakajima M."/>
            <person name="Enju A."/>
            <person name="Kamiya A."/>
            <person name="Narusaka M."/>
            <person name="Shin-i T."/>
            <person name="Nakagawa M."/>
            <person name="Sakamoto N."/>
            <person name="Oishi K."/>
            <person name="Kohara Y."/>
            <person name="Kobayashi M."/>
            <person name="Toyoda A."/>
            <person name="Sakaki Y."/>
            <person name="Sakurai T."/>
            <person name="Iida K."/>
            <person name="Akiyama K."/>
            <person name="Satou M."/>
            <person name="Toyoda T."/>
            <person name="Konagaya A."/>
            <person name="Carninci P."/>
            <person name="Kawai J."/>
            <person name="Hayashizaki Y."/>
            <person name="Shinozaki K."/>
        </authorList>
    </citation>
    <scope>NUCLEOTIDE SEQUENCE [LARGE SCALE MRNA]</scope>
    <source>
        <strain>cv. Columbia</strain>
    </source>
</reference>
<reference key="7">
    <citation type="submission" date="2002-03" db="EMBL/GenBank/DDBJ databases">
        <title>Full-length cDNA from Arabidopsis thaliana.</title>
        <authorList>
            <person name="Brover V.V."/>
            <person name="Troukhan M.E."/>
            <person name="Alexandrov N.A."/>
            <person name="Lu Y.-P."/>
            <person name="Flavell R.B."/>
            <person name="Feldmann K.A."/>
        </authorList>
    </citation>
    <scope>NUCLEOTIDE SEQUENCE [LARGE SCALE MRNA]</scope>
</reference>
<reference key="8">
    <citation type="journal article" date="2003" name="J. Biol. Chem.">
        <title>The water-water cycle is essential for chloroplast protection in the absence of stress.</title>
        <authorList>
            <person name="Rizhsky L."/>
            <person name="Liang H."/>
            <person name="Mittler R."/>
        </authorList>
    </citation>
    <scope>FUNCTION</scope>
    <scope>DISRUPTION PHENOTYPE</scope>
</reference>
<reference key="9">
    <citation type="journal article" date="2006" name="Plant Cell">
        <title>Posttranscriptional induction of two Cu/Zn superoxide dismutase genes in Arabidopsis is mediated by downregulation of miR398 and important for oxidative stress tolerance.</title>
        <authorList>
            <person name="Sunkar R."/>
            <person name="Kapoor A."/>
            <person name="Zhu J.-K."/>
        </authorList>
    </citation>
    <scope>FUNCTION</scope>
    <scope>INDUCTION BY OXIDATIVE STRESS</scope>
    <scope>TISSUE SPECIFICITY</scope>
</reference>
<reference key="10">
    <citation type="journal article" date="2007" name="Plant Mol. Biol.">
        <title>Aconitase plays a role in regulating resistance to oxidative stress and cell death in Arabidopsis and Nicotiana benthamiana.</title>
        <authorList>
            <person name="Moeder W."/>
            <person name="Del Pozo O."/>
            <person name="Navarre D.A."/>
            <person name="Martin G.B."/>
            <person name="Klessig D.F."/>
        </authorList>
    </citation>
    <scope>REGULATION BY ACONITASE</scope>
</reference>
<reference key="11">
    <citation type="journal article" date="2008" name="Physiol. Plantarum">
        <title>Long-term effects of mild salt stress on growth, ion accumulation and superoxide dismutase expression of Arabidopsis rosette leaves.</title>
        <authorList>
            <person name="Attia H."/>
            <person name="Arnaud N."/>
            <person name="Karray N."/>
            <person name="Lachaal M."/>
        </authorList>
    </citation>
    <scope>INDUCTION BY SALT</scope>
    <source>
        <strain>cv. Columbia</strain>
    </source>
</reference>
<reference key="12">
    <citation type="journal article" date="2008" name="Plant Mol. Biol.">
        <title>Sucrose induction of Arabidopsis miR398 represses two Cu/Zn superoxide dismutases.</title>
        <authorList>
            <person name="Dugas D.V."/>
            <person name="Bartel B."/>
        </authorList>
    </citation>
    <scope>INDUCTION BY SUCROSE</scope>
    <source>
        <strain>cv. Columbia</strain>
    </source>
</reference>
<reference key="13">
    <citation type="journal article" date="2008" name="PLoS ONE">
        <title>Sorting signals, N-terminal modifications and abundance of the chloroplast proteome.</title>
        <authorList>
            <person name="Zybailov B."/>
            <person name="Rutschow H."/>
            <person name="Friso G."/>
            <person name="Rudella A."/>
            <person name="Emanuelsson O."/>
            <person name="Sun Q."/>
            <person name="van Wijk K.J."/>
        </authorList>
    </citation>
    <scope>IDENTIFICATION BY MASS SPECTROMETRY</scope>
    <scope>SUBCELLULAR LOCATION [LARGE SCALE ANALYSIS]</scope>
</reference>
<keyword id="KW-0049">Antioxidant</keyword>
<keyword id="KW-0150">Chloroplast</keyword>
<keyword id="KW-0186">Copper</keyword>
<keyword id="KW-1015">Disulfide bond</keyword>
<keyword id="KW-0479">Metal-binding</keyword>
<keyword id="KW-0560">Oxidoreductase</keyword>
<keyword id="KW-0934">Plastid</keyword>
<keyword id="KW-1185">Reference proteome</keyword>
<keyword id="KW-0809">Transit peptide</keyword>
<keyword id="KW-0862">Zinc</keyword>